<feature type="chain" id="PRO_1000013973" description="Glucose-6-phosphate isomerase">
    <location>
        <begin position="1"/>
        <end position="549"/>
    </location>
</feature>
<feature type="active site" description="Proton donor" evidence="1">
    <location>
        <position position="355"/>
    </location>
</feature>
<feature type="active site" evidence="1">
    <location>
        <position position="387"/>
    </location>
</feature>
<feature type="active site" evidence="1">
    <location>
        <position position="515"/>
    </location>
</feature>
<dbReference type="EC" id="5.3.1.9" evidence="1"/>
<dbReference type="EMBL" id="CP000672">
    <property type="protein sequence ID" value="ABQ99132.1"/>
    <property type="molecule type" value="Genomic_DNA"/>
</dbReference>
<dbReference type="SMR" id="A5UED2"/>
<dbReference type="KEGG" id="hiq:CGSHiGG_00035"/>
<dbReference type="HOGENOM" id="CLU_017947_3_1_6"/>
<dbReference type="UniPathway" id="UPA00109">
    <property type="reaction ID" value="UER00181"/>
</dbReference>
<dbReference type="UniPathway" id="UPA00138"/>
<dbReference type="Proteomes" id="UP000001990">
    <property type="component" value="Chromosome"/>
</dbReference>
<dbReference type="GO" id="GO:0005829">
    <property type="term" value="C:cytosol"/>
    <property type="evidence" value="ECO:0007669"/>
    <property type="project" value="TreeGrafter"/>
</dbReference>
<dbReference type="GO" id="GO:0097367">
    <property type="term" value="F:carbohydrate derivative binding"/>
    <property type="evidence" value="ECO:0007669"/>
    <property type="project" value="InterPro"/>
</dbReference>
<dbReference type="GO" id="GO:0004347">
    <property type="term" value="F:glucose-6-phosphate isomerase activity"/>
    <property type="evidence" value="ECO:0007669"/>
    <property type="project" value="UniProtKB-UniRule"/>
</dbReference>
<dbReference type="GO" id="GO:0048029">
    <property type="term" value="F:monosaccharide binding"/>
    <property type="evidence" value="ECO:0007669"/>
    <property type="project" value="TreeGrafter"/>
</dbReference>
<dbReference type="GO" id="GO:0006094">
    <property type="term" value="P:gluconeogenesis"/>
    <property type="evidence" value="ECO:0007669"/>
    <property type="project" value="UniProtKB-UniRule"/>
</dbReference>
<dbReference type="GO" id="GO:0051156">
    <property type="term" value="P:glucose 6-phosphate metabolic process"/>
    <property type="evidence" value="ECO:0007669"/>
    <property type="project" value="TreeGrafter"/>
</dbReference>
<dbReference type="GO" id="GO:0006096">
    <property type="term" value="P:glycolytic process"/>
    <property type="evidence" value="ECO:0007669"/>
    <property type="project" value="UniProtKB-UniRule"/>
</dbReference>
<dbReference type="CDD" id="cd05015">
    <property type="entry name" value="SIS_PGI_1"/>
    <property type="match status" value="1"/>
</dbReference>
<dbReference type="CDD" id="cd05016">
    <property type="entry name" value="SIS_PGI_2"/>
    <property type="match status" value="1"/>
</dbReference>
<dbReference type="FunFam" id="1.10.1390.10:FF:000001">
    <property type="entry name" value="Glucose-6-phosphate isomerase"/>
    <property type="match status" value="1"/>
</dbReference>
<dbReference type="FunFam" id="3.40.50.10490:FF:000004">
    <property type="entry name" value="Glucose-6-phosphate isomerase"/>
    <property type="match status" value="1"/>
</dbReference>
<dbReference type="Gene3D" id="1.10.1390.10">
    <property type="match status" value="1"/>
</dbReference>
<dbReference type="Gene3D" id="3.40.50.10490">
    <property type="entry name" value="Glucose-6-phosphate isomerase like protein, domain 1"/>
    <property type="match status" value="2"/>
</dbReference>
<dbReference type="HAMAP" id="MF_00473">
    <property type="entry name" value="G6P_isomerase"/>
    <property type="match status" value="1"/>
</dbReference>
<dbReference type="InterPro" id="IPR001672">
    <property type="entry name" value="G6P_Isomerase"/>
</dbReference>
<dbReference type="InterPro" id="IPR023096">
    <property type="entry name" value="G6P_Isomerase_C"/>
</dbReference>
<dbReference type="InterPro" id="IPR018189">
    <property type="entry name" value="Phosphoglucose_isomerase_CS"/>
</dbReference>
<dbReference type="InterPro" id="IPR046348">
    <property type="entry name" value="SIS_dom_sf"/>
</dbReference>
<dbReference type="InterPro" id="IPR035476">
    <property type="entry name" value="SIS_PGI_1"/>
</dbReference>
<dbReference type="InterPro" id="IPR035482">
    <property type="entry name" value="SIS_PGI_2"/>
</dbReference>
<dbReference type="NCBIfam" id="NF001211">
    <property type="entry name" value="PRK00179.1"/>
    <property type="match status" value="1"/>
</dbReference>
<dbReference type="PANTHER" id="PTHR11469">
    <property type="entry name" value="GLUCOSE-6-PHOSPHATE ISOMERASE"/>
    <property type="match status" value="1"/>
</dbReference>
<dbReference type="PANTHER" id="PTHR11469:SF1">
    <property type="entry name" value="GLUCOSE-6-PHOSPHATE ISOMERASE"/>
    <property type="match status" value="1"/>
</dbReference>
<dbReference type="Pfam" id="PF00342">
    <property type="entry name" value="PGI"/>
    <property type="match status" value="1"/>
</dbReference>
<dbReference type="PRINTS" id="PR00662">
    <property type="entry name" value="G6PISOMERASE"/>
</dbReference>
<dbReference type="SUPFAM" id="SSF53697">
    <property type="entry name" value="SIS domain"/>
    <property type="match status" value="1"/>
</dbReference>
<dbReference type="PROSITE" id="PS00765">
    <property type="entry name" value="P_GLUCOSE_ISOMERASE_1"/>
    <property type="match status" value="1"/>
</dbReference>
<dbReference type="PROSITE" id="PS00174">
    <property type="entry name" value="P_GLUCOSE_ISOMERASE_2"/>
    <property type="match status" value="1"/>
</dbReference>
<dbReference type="PROSITE" id="PS51463">
    <property type="entry name" value="P_GLUCOSE_ISOMERASE_3"/>
    <property type="match status" value="1"/>
</dbReference>
<organism>
    <name type="scientific">Haemophilus influenzae (strain PittGG)</name>
    <dbReference type="NCBI Taxonomy" id="374931"/>
    <lineage>
        <taxon>Bacteria</taxon>
        <taxon>Pseudomonadati</taxon>
        <taxon>Pseudomonadota</taxon>
        <taxon>Gammaproteobacteria</taxon>
        <taxon>Pasteurellales</taxon>
        <taxon>Pasteurellaceae</taxon>
        <taxon>Haemophilus</taxon>
    </lineage>
</organism>
<keyword id="KW-0963">Cytoplasm</keyword>
<keyword id="KW-0312">Gluconeogenesis</keyword>
<keyword id="KW-0324">Glycolysis</keyword>
<keyword id="KW-0413">Isomerase</keyword>
<name>G6PI_HAEIG</name>
<accession>A5UED2</accession>
<reference key="1">
    <citation type="journal article" date="2007" name="Genome Biol.">
        <title>Characterization and modeling of the Haemophilus influenzae core and supragenomes based on the complete genomic sequences of Rd and 12 clinical nontypeable strains.</title>
        <authorList>
            <person name="Hogg J.S."/>
            <person name="Hu F.Z."/>
            <person name="Janto B."/>
            <person name="Boissy R."/>
            <person name="Hayes J."/>
            <person name="Keefe R."/>
            <person name="Post J.C."/>
            <person name="Ehrlich G.D."/>
        </authorList>
    </citation>
    <scope>NUCLEOTIDE SEQUENCE [LARGE SCALE GENOMIC DNA]</scope>
    <source>
        <strain>PittGG</strain>
    </source>
</reference>
<sequence length="549" mass="61561">MKNINPTHTQAWKSLEAHKAELSNTTIQDLFKQEKNRFDDYSLTFNNQILVDFSKNNINQTTLSHLRQLAQECALDSAKEAMFTGEKINRTENRAVLHTALRNRTNTPVLVDGKDVMPEVNAVLAKMKDFCQRIISGEWKGYTGKAITDVVNIGIGGSDLGPYTVTEALRPYKNHLNMHFVSNVDGTHIAETLKKVNPETTLFLVASKTFTTQETMTNAQSARDWLLKAAKDESAVAKHFAALSTNAKDVEKFGIDTNNMFEFWDWVGGRYSLWSAIGLSIALSIGFENFEALLNGAHEMDKHFRSTPIEQNIPTTLALVGLWNTNFLGAQTEAILPYDQYLHRFAAYFQQGNMESNGKYVDRDGNVINNYQTGPIIWGEPGTNGQHAFYQLIHQGTTLIPCDFIAPAQSHNPLADHHNKLLSNFFAQTEALAFGKTKEEVEAEFIKAGKSLDDVKNIVPFKVFTGNKPTNSILVQKITPFTLGALIAMYEHKIFVQGVIFNIFSFDQWGVELGKQLANRILPELTDSEKVASHDSSTNGLINQFKTWR</sequence>
<proteinExistence type="inferred from homology"/>
<protein>
    <recommendedName>
        <fullName evidence="1">Glucose-6-phosphate isomerase</fullName>
        <shortName evidence="1">GPI</shortName>
        <ecNumber evidence="1">5.3.1.9</ecNumber>
    </recommendedName>
    <alternativeName>
        <fullName evidence="1">Phosphoglucose isomerase</fullName>
        <shortName evidence="1">PGI</shortName>
    </alternativeName>
    <alternativeName>
        <fullName evidence="1">Phosphohexose isomerase</fullName>
        <shortName evidence="1">PHI</shortName>
    </alternativeName>
</protein>
<evidence type="ECO:0000255" key="1">
    <source>
        <dbReference type="HAMAP-Rule" id="MF_00473"/>
    </source>
</evidence>
<gene>
    <name evidence="1" type="primary">pgi</name>
    <name type="ordered locus">CGSHiGG_00035</name>
</gene>
<comment type="function">
    <text evidence="1">Catalyzes the reversible isomerization of glucose-6-phosphate to fructose-6-phosphate.</text>
</comment>
<comment type="catalytic activity">
    <reaction evidence="1">
        <text>alpha-D-glucose 6-phosphate = beta-D-fructose 6-phosphate</text>
        <dbReference type="Rhea" id="RHEA:11816"/>
        <dbReference type="ChEBI" id="CHEBI:57634"/>
        <dbReference type="ChEBI" id="CHEBI:58225"/>
        <dbReference type="EC" id="5.3.1.9"/>
    </reaction>
</comment>
<comment type="pathway">
    <text evidence="1">Carbohydrate biosynthesis; gluconeogenesis.</text>
</comment>
<comment type="pathway">
    <text evidence="1">Carbohydrate degradation; glycolysis; D-glyceraldehyde 3-phosphate and glycerone phosphate from D-glucose: step 2/4.</text>
</comment>
<comment type="subcellular location">
    <subcellularLocation>
        <location evidence="1">Cytoplasm</location>
    </subcellularLocation>
</comment>
<comment type="similarity">
    <text evidence="1">Belongs to the GPI family.</text>
</comment>